<reference key="1">
    <citation type="submission" date="2007-08" db="EMBL/GenBank/DDBJ databases">
        <title>Complete sequence of Roseiflexus castenholzii DSM 13941.</title>
        <authorList>
            <consortium name="US DOE Joint Genome Institute"/>
            <person name="Copeland A."/>
            <person name="Lucas S."/>
            <person name="Lapidus A."/>
            <person name="Barry K."/>
            <person name="Glavina del Rio T."/>
            <person name="Dalin E."/>
            <person name="Tice H."/>
            <person name="Pitluck S."/>
            <person name="Thompson L.S."/>
            <person name="Brettin T."/>
            <person name="Bruce D."/>
            <person name="Detter J.C."/>
            <person name="Han C."/>
            <person name="Tapia R."/>
            <person name="Schmutz J."/>
            <person name="Larimer F."/>
            <person name="Land M."/>
            <person name="Hauser L."/>
            <person name="Kyrpides N."/>
            <person name="Mikhailova N."/>
            <person name="Bryant D.A."/>
            <person name="Hanada S."/>
            <person name="Tsukatani Y."/>
            <person name="Richardson P."/>
        </authorList>
    </citation>
    <scope>NUCLEOTIDE SEQUENCE [LARGE SCALE GENOMIC DNA]</scope>
    <source>
        <strain>DSM 13941 / HLO8</strain>
    </source>
</reference>
<sequence>MDDHLYRRRAAERALDYVESGMAIGLGTGSTASFMLRGLAARLADGRLQRVVGVPTSEQTAVLARELGIPLTTLDRHPSLDLALDGADEIDPHLRLIKGLGGAMLREKIVAASAARFVVMASVSKRVERLGERSPLPVEVVTFGMPLCIRRLAALGGEPVLRCDHSGAPFVTDEGNLILDCHFGVIADPEALAAAICAIPGVVAHGLFLGMASLAVIAGPDGIVELECPDASRR</sequence>
<protein>
    <recommendedName>
        <fullName evidence="1">Ribose-5-phosphate isomerase A</fullName>
        <ecNumber evidence="1">5.3.1.6</ecNumber>
    </recommendedName>
    <alternativeName>
        <fullName evidence="1">Phosphoriboisomerase A</fullName>
        <shortName evidence="1">PRI</shortName>
    </alternativeName>
</protein>
<name>RPIA_ROSCS</name>
<feature type="chain" id="PRO_1000077074" description="Ribose-5-phosphate isomerase A">
    <location>
        <begin position="1"/>
        <end position="234"/>
    </location>
</feature>
<feature type="active site" description="Proton acceptor" evidence="1">
    <location>
        <position position="107"/>
    </location>
</feature>
<feature type="binding site" evidence="1">
    <location>
        <begin position="28"/>
        <end position="31"/>
    </location>
    <ligand>
        <name>substrate</name>
    </ligand>
</feature>
<feature type="binding site" evidence="1">
    <location>
        <begin position="85"/>
        <end position="88"/>
    </location>
    <ligand>
        <name>substrate</name>
    </ligand>
</feature>
<feature type="binding site" evidence="1">
    <location>
        <begin position="98"/>
        <end position="101"/>
    </location>
    <ligand>
        <name>substrate</name>
    </ligand>
</feature>
<feature type="binding site" evidence="1">
    <location>
        <position position="125"/>
    </location>
    <ligand>
        <name>substrate</name>
    </ligand>
</feature>
<dbReference type="EC" id="5.3.1.6" evidence="1"/>
<dbReference type="EMBL" id="CP000804">
    <property type="protein sequence ID" value="ABU59037.1"/>
    <property type="molecule type" value="Genomic_DNA"/>
</dbReference>
<dbReference type="RefSeq" id="WP_012121461.1">
    <property type="nucleotide sequence ID" value="NC_009767.1"/>
</dbReference>
<dbReference type="SMR" id="A7NNA4"/>
<dbReference type="STRING" id="383372.Rcas_2980"/>
<dbReference type="KEGG" id="rca:Rcas_2980"/>
<dbReference type="eggNOG" id="COG0120">
    <property type="taxonomic scope" value="Bacteria"/>
</dbReference>
<dbReference type="HOGENOM" id="CLU_056590_1_1_0"/>
<dbReference type="OrthoDB" id="5870696at2"/>
<dbReference type="UniPathway" id="UPA00115">
    <property type="reaction ID" value="UER00412"/>
</dbReference>
<dbReference type="Proteomes" id="UP000000263">
    <property type="component" value="Chromosome"/>
</dbReference>
<dbReference type="GO" id="GO:0004751">
    <property type="term" value="F:ribose-5-phosphate isomerase activity"/>
    <property type="evidence" value="ECO:0007669"/>
    <property type="project" value="UniProtKB-UniRule"/>
</dbReference>
<dbReference type="GO" id="GO:0009052">
    <property type="term" value="P:pentose-phosphate shunt, non-oxidative branch"/>
    <property type="evidence" value="ECO:0007669"/>
    <property type="project" value="UniProtKB-UniRule"/>
</dbReference>
<dbReference type="CDD" id="cd01398">
    <property type="entry name" value="RPI_A"/>
    <property type="match status" value="1"/>
</dbReference>
<dbReference type="FunFam" id="3.40.50.1360:FF:000001">
    <property type="entry name" value="Ribose-5-phosphate isomerase A"/>
    <property type="match status" value="1"/>
</dbReference>
<dbReference type="Gene3D" id="3.30.70.260">
    <property type="match status" value="1"/>
</dbReference>
<dbReference type="Gene3D" id="3.40.50.1360">
    <property type="match status" value="1"/>
</dbReference>
<dbReference type="HAMAP" id="MF_00170">
    <property type="entry name" value="Rib_5P_isom_A"/>
    <property type="match status" value="1"/>
</dbReference>
<dbReference type="InterPro" id="IPR037171">
    <property type="entry name" value="NagB/RpiA_transferase-like"/>
</dbReference>
<dbReference type="InterPro" id="IPR050262">
    <property type="entry name" value="Ribose-5P_isomerase"/>
</dbReference>
<dbReference type="InterPro" id="IPR020672">
    <property type="entry name" value="Ribose5P_isomerase_typA_subgr"/>
</dbReference>
<dbReference type="InterPro" id="IPR004788">
    <property type="entry name" value="Ribose5P_isomerase_type_A"/>
</dbReference>
<dbReference type="NCBIfam" id="NF001924">
    <property type="entry name" value="PRK00702.1"/>
    <property type="match status" value="1"/>
</dbReference>
<dbReference type="NCBIfam" id="TIGR00021">
    <property type="entry name" value="rpiA"/>
    <property type="match status" value="1"/>
</dbReference>
<dbReference type="PANTHER" id="PTHR43748">
    <property type="entry name" value="RIBOSE-5-PHOSPHATE ISOMERASE 3, CHLOROPLASTIC-RELATED"/>
    <property type="match status" value="1"/>
</dbReference>
<dbReference type="PANTHER" id="PTHR43748:SF3">
    <property type="entry name" value="RIBOSE-5-PHOSPHATE ISOMERASE 3, CHLOROPLASTIC-RELATED"/>
    <property type="match status" value="1"/>
</dbReference>
<dbReference type="Pfam" id="PF06026">
    <property type="entry name" value="Rib_5-P_isom_A"/>
    <property type="match status" value="1"/>
</dbReference>
<dbReference type="SUPFAM" id="SSF75445">
    <property type="entry name" value="D-ribose-5-phosphate isomerase (RpiA), lid domain"/>
    <property type="match status" value="1"/>
</dbReference>
<dbReference type="SUPFAM" id="SSF100950">
    <property type="entry name" value="NagB/RpiA/CoA transferase-like"/>
    <property type="match status" value="1"/>
</dbReference>
<proteinExistence type="inferred from homology"/>
<accession>A7NNA4</accession>
<organism>
    <name type="scientific">Roseiflexus castenholzii (strain DSM 13941 / HLO8)</name>
    <dbReference type="NCBI Taxonomy" id="383372"/>
    <lineage>
        <taxon>Bacteria</taxon>
        <taxon>Bacillati</taxon>
        <taxon>Chloroflexota</taxon>
        <taxon>Chloroflexia</taxon>
        <taxon>Chloroflexales</taxon>
        <taxon>Roseiflexineae</taxon>
        <taxon>Roseiflexaceae</taxon>
        <taxon>Roseiflexus</taxon>
    </lineage>
</organism>
<gene>
    <name evidence="1" type="primary">rpiA</name>
    <name type="ordered locus">Rcas_2980</name>
</gene>
<comment type="function">
    <text evidence="1">Catalyzes the reversible conversion of ribose-5-phosphate to ribulose 5-phosphate.</text>
</comment>
<comment type="catalytic activity">
    <reaction evidence="1">
        <text>aldehydo-D-ribose 5-phosphate = D-ribulose 5-phosphate</text>
        <dbReference type="Rhea" id="RHEA:14657"/>
        <dbReference type="ChEBI" id="CHEBI:58121"/>
        <dbReference type="ChEBI" id="CHEBI:58273"/>
        <dbReference type="EC" id="5.3.1.6"/>
    </reaction>
</comment>
<comment type="pathway">
    <text evidence="1">Carbohydrate degradation; pentose phosphate pathway; D-ribose 5-phosphate from D-ribulose 5-phosphate (non-oxidative stage): step 1/1.</text>
</comment>
<comment type="subunit">
    <text evidence="1">Homodimer.</text>
</comment>
<comment type="similarity">
    <text evidence="1">Belongs to the ribose 5-phosphate isomerase family.</text>
</comment>
<evidence type="ECO:0000255" key="1">
    <source>
        <dbReference type="HAMAP-Rule" id="MF_00170"/>
    </source>
</evidence>
<keyword id="KW-0413">Isomerase</keyword>
<keyword id="KW-1185">Reference proteome</keyword>